<keyword id="KW-1185">Reference proteome</keyword>
<dbReference type="EMBL" id="AE014299">
    <property type="protein sequence ID" value="AAN55058.1"/>
    <property type="molecule type" value="Genomic_DNA"/>
</dbReference>
<dbReference type="RefSeq" id="NP_717614.1">
    <property type="nucleotide sequence ID" value="NC_004347.2"/>
</dbReference>
<dbReference type="RefSeq" id="WP_011072092.1">
    <property type="nucleotide sequence ID" value="NC_004347.2"/>
</dbReference>
<dbReference type="SMR" id="Q8EFG5"/>
<dbReference type="STRING" id="211586.SO_2008"/>
<dbReference type="PaxDb" id="211586-SO_2008"/>
<dbReference type="DNASU" id="1169760"/>
<dbReference type="KEGG" id="son:SO_2008"/>
<dbReference type="PATRIC" id="fig|211586.12.peg.1927"/>
<dbReference type="eggNOG" id="COG3220">
    <property type="taxonomic scope" value="Bacteria"/>
</dbReference>
<dbReference type="HOGENOM" id="CLU_064263_0_0_6"/>
<dbReference type="OrthoDB" id="9763101at2"/>
<dbReference type="PhylomeDB" id="Q8EFG5"/>
<dbReference type="BioCyc" id="SONE211586:G1GMP-1850-MONOMER"/>
<dbReference type="Proteomes" id="UP000008186">
    <property type="component" value="Chromosome"/>
</dbReference>
<dbReference type="Gene3D" id="3.20.20.150">
    <property type="entry name" value="Divalent-metal-dependent TIM barrel enzymes"/>
    <property type="match status" value="1"/>
</dbReference>
<dbReference type="HAMAP" id="MF_00697">
    <property type="entry name" value="UPF0276"/>
    <property type="match status" value="1"/>
</dbReference>
<dbReference type="InterPro" id="IPR007801">
    <property type="entry name" value="MbnB/TglH/ChrH"/>
</dbReference>
<dbReference type="InterPro" id="IPR036237">
    <property type="entry name" value="Xyl_isomerase-like_sf"/>
</dbReference>
<dbReference type="NCBIfam" id="NF003818">
    <property type="entry name" value="PRK05409.1"/>
    <property type="match status" value="1"/>
</dbReference>
<dbReference type="PANTHER" id="PTHR42194">
    <property type="entry name" value="UPF0276 PROTEIN HI_1600"/>
    <property type="match status" value="1"/>
</dbReference>
<dbReference type="PANTHER" id="PTHR42194:SF1">
    <property type="entry name" value="UPF0276 PROTEIN HI_1600"/>
    <property type="match status" value="1"/>
</dbReference>
<dbReference type="Pfam" id="PF05114">
    <property type="entry name" value="MbnB_TglH_ChrH"/>
    <property type="match status" value="1"/>
</dbReference>
<dbReference type="SUPFAM" id="SSF51658">
    <property type="entry name" value="Xylose isomerase-like"/>
    <property type="match status" value="1"/>
</dbReference>
<organism>
    <name type="scientific">Shewanella oneidensis (strain ATCC 700550 / JCM 31522 / CIP 106686 / LMG 19005 / NCIMB 14063 / MR-1)</name>
    <dbReference type="NCBI Taxonomy" id="211586"/>
    <lineage>
        <taxon>Bacteria</taxon>
        <taxon>Pseudomonadati</taxon>
        <taxon>Pseudomonadota</taxon>
        <taxon>Gammaproteobacteria</taxon>
        <taxon>Alteromonadales</taxon>
        <taxon>Shewanellaceae</taxon>
        <taxon>Shewanella</taxon>
    </lineage>
</organism>
<reference key="1">
    <citation type="journal article" date="2002" name="Nat. Biotechnol.">
        <title>Genome sequence of the dissimilatory metal ion-reducing bacterium Shewanella oneidensis.</title>
        <authorList>
            <person name="Heidelberg J.F."/>
            <person name="Paulsen I.T."/>
            <person name="Nelson K.E."/>
            <person name="Gaidos E.J."/>
            <person name="Nelson W.C."/>
            <person name="Read T.D."/>
            <person name="Eisen J.A."/>
            <person name="Seshadri R."/>
            <person name="Ward N.L."/>
            <person name="Methe B.A."/>
            <person name="Clayton R.A."/>
            <person name="Meyer T."/>
            <person name="Tsapin A."/>
            <person name="Scott J."/>
            <person name="Beanan M.J."/>
            <person name="Brinkac L.M."/>
            <person name="Daugherty S.C."/>
            <person name="DeBoy R.T."/>
            <person name="Dodson R.J."/>
            <person name="Durkin A.S."/>
            <person name="Haft D.H."/>
            <person name="Kolonay J.F."/>
            <person name="Madupu R."/>
            <person name="Peterson J.D."/>
            <person name="Umayam L.A."/>
            <person name="White O."/>
            <person name="Wolf A.M."/>
            <person name="Vamathevan J.J."/>
            <person name="Weidman J.F."/>
            <person name="Impraim M."/>
            <person name="Lee K."/>
            <person name="Berry K.J."/>
            <person name="Lee C."/>
            <person name="Mueller J."/>
            <person name="Khouri H.M."/>
            <person name="Gill J."/>
            <person name="Utterback T.R."/>
            <person name="McDonald L.A."/>
            <person name="Feldblyum T.V."/>
            <person name="Smith H.O."/>
            <person name="Venter J.C."/>
            <person name="Nealson K.H."/>
            <person name="Fraser C.M."/>
        </authorList>
    </citation>
    <scope>NUCLEOTIDE SEQUENCE [LARGE SCALE GENOMIC DNA]</scope>
    <source>
        <strain>ATCC 700550 / JCM 31522 / CIP 106686 / LMG 19005 / NCIMB 14063 / MR-1</strain>
    </source>
</reference>
<feature type="chain" id="PRO_0000192707" description="UPF0276 protein SO_2008">
    <location>
        <begin position="1"/>
        <end position="279"/>
    </location>
</feature>
<name>Y2008_SHEON</name>
<proteinExistence type="inferred from homology"/>
<protein>
    <recommendedName>
        <fullName evidence="1">UPF0276 protein SO_2008</fullName>
    </recommendedName>
</protein>
<gene>
    <name type="ordered locus">SO_2008</name>
</gene>
<accession>Q8EFG5</accession>
<evidence type="ECO:0000255" key="1">
    <source>
        <dbReference type="HAMAP-Rule" id="MF_00697"/>
    </source>
</evidence>
<comment type="similarity">
    <text evidence="1">Belongs to the UPF0276 family.</text>
</comment>
<sequence length="279" mass="31594">MQERGLVGLGLRREMLSEFCQQLPSAIDFLEVAPENWMTLGGKYGKQFRQLTEQHTFFCHGLSLSIGSPEPLDLEFVRRIKAFMDLHQIDVYSEHLSYCSGAGHLYDLMPIPFTEAAVKHVARRVKQVEDILERPLILENVSFYAAPSAQMTELAFLTAVLEEADCKLLLDVNNIYVNSINHQYDALAFLKAMPTERIAYLHIAGHFKESEELLIDTHGSDINAPVWALLDSCYAEHGVLPTLLERDFNLPATAHLLDEINQIHAYQARAKSNLDKRIA</sequence>